<name>ARNF_ECO5E</name>
<gene>
    <name evidence="1" type="primary">arnF</name>
    <name type="ordered locus">ECH74115_3401</name>
</gene>
<sequence>MGLIWGLFSVIIASVAQLSLGFAASHLPPMTHLWDFIAALLAFGLDARILLLGLLGYLLSVFCWYKTLHKLALSKAYALLSMSYVLVWIASMVLPGWEGTFSLKALLGVACIMSGLMLIFLPTTKQRY</sequence>
<accession>B5YXQ2</accession>
<proteinExistence type="inferred from homology"/>
<comment type="function">
    <text evidence="1">Translocates 4-amino-4-deoxy-L-arabinose-phosphoundecaprenol (alpha-L-Ara4N-phosphoundecaprenol) from the cytoplasmic to the periplasmic side of the inner membrane.</text>
</comment>
<comment type="pathway">
    <text evidence="1">Bacterial outer membrane biogenesis; lipopolysaccharide biosynthesis.</text>
</comment>
<comment type="subunit">
    <text evidence="1">Heterodimer of ArnE and ArnF.</text>
</comment>
<comment type="subcellular location">
    <subcellularLocation>
        <location evidence="1">Cell inner membrane</location>
        <topology evidence="1">Multi-pass membrane protein</topology>
    </subcellularLocation>
</comment>
<comment type="similarity">
    <text evidence="1">Belongs to the ArnF family.</text>
</comment>
<reference key="1">
    <citation type="journal article" date="2011" name="Proc. Natl. Acad. Sci. U.S.A.">
        <title>Genomic anatomy of Escherichia coli O157:H7 outbreaks.</title>
        <authorList>
            <person name="Eppinger M."/>
            <person name="Mammel M.K."/>
            <person name="Leclerc J.E."/>
            <person name="Ravel J."/>
            <person name="Cebula T.A."/>
        </authorList>
    </citation>
    <scope>NUCLEOTIDE SEQUENCE [LARGE SCALE GENOMIC DNA]</scope>
    <source>
        <strain>EC4115 / EHEC</strain>
    </source>
</reference>
<organism>
    <name type="scientific">Escherichia coli O157:H7 (strain EC4115 / EHEC)</name>
    <dbReference type="NCBI Taxonomy" id="444450"/>
    <lineage>
        <taxon>Bacteria</taxon>
        <taxon>Pseudomonadati</taxon>
        <taxon>Pseudomonadota</taxon>
        <taxon>Gammaproteobacteria</taxon>
        <taxon>Enterobacterales</taxon>
        <taxon>Enterobacteriaceae</taxon>
        <taxon>Escherichia</taxon>
    </lineage>
</organism>
<dbReference type="EMBL" id="CP001164">
    <property type="protein sequence ID" value="ACI36342.1"/>
    <property type="molecule type" value="Genomic_DNA"/>
</dbReference>
<dbReference type="RefSeq" id="WP_000523005.1">
    <property type="nucleotide sequence ID" value="NC_011353.1"/>
</dbReference>
<dbReference type="GeneID" id="75205691"/>
<dbReference type="KEGG" id="ecf:ECH74115_3401"/>
<dbReference type="HOGENOM" id="CLU_131462_1_0_6"/>
<dbReference type="UniPathway" id="UPA00030"/>
<dbReference type="GO" id="GO:0005886">
    <property type="term" value="C:plasma membrane"/>
    <property type="evidence" value="ECO:0007669"/>
    <property type="project" value="UniProtKB-SubCell"/>
</dbReference>
<dbReference type="GO" id="GO:1901505">
    <property type="term" value="F:carbohydrate derivative transmembrane transporter activity"/>
    <property type="evidence" value="ECO:0007669"/>
    <property type="project" value="InterPro"/>
</dbReference>
<dbReference type="GO" id="GO:0009245">
    <property type="term" value="P:lipid A biosynthetic process"/>
    <property type="evidence" value="ECO:0007669"/>
    <property type="project" value="UniProtKB-UniRule"/>
</dbReference>
<dbReference type="GO" id="GO:0009103">
    <property type="term" value="P:lipopolysaccharide biosynthetic process"/>
    <property type="evidence" value="ECO:0007669"/>
    <property type="project" value="UniProtKB-UniRule"/>
</dbReference>
<dbReference type="FunFam" id="1.10.3730.20:FF:000003">
    <property type="entry name" value="Probable 4-amino-4-deoxy-L-arabinose-phosphoundecaprenol flippase subunit ArnF"/>
    <property type="match status" value="1"/>
</dbReference>
<dbReference type="Gene3D" id="1.10.3730.20">
    <property type="match status" value="1"/>
</dbReference>
<dbReference type="HAMAP" id="MF_00538">
    <property type="entry name" value="Flippase_ArnF"/>
    <property type="match status" value="1"/>
</dbReference>
<dbReference type="InterPro" id="IPR022832">
    <property type="entry name" value="Flippase_ArnF"/>
</dbReference>
<dbReference type="InterPro" id="IPR000390">
    <property type="entry name" value="Small_drug/metabolite_transptr"/>
</dbReference>
<dbReference type="NCBIfam" id="NF002816">
    <property type="entry name" value="PRK02971.1-2"/>
    <property type="match status" value="1"/>
</dbReference>
<dbReference type="PANTHER" id="PTHR30561:SF9">
    <property type="entry name" value="4-AMINO-4-DEOXY-L-ARABINOSE-PHOSPHOUNDECAPRENOL FLIPPASE SUBUNIT ARNF-RELATED"/>
    <property type="match status" value="1"/>
</dbReference>
<dbReference type="PANTHER" id="PTHR30561">
    <property type="entry name" value="SMR FAMILY PROTON-DEPENDENT DRUG EFFLUX TRANSPORTER SUGE"/>
    <property type="match status" value="1"/>
</dbReference>
<dbReference type="SUPFAM" id="SSF103481">
    <property type="entry name" value="Multidrug resistance efflux transporter EmrE"/>
    <property type="match status" value="1"/>
</dbReference>
<feature type="chain" id="PRO_1000128659" description="Probable 4-amino-4-deoxy-L-arabinose-phosphoundecaprenol flippase subunit ArnF">
    <location>
        <begin position="1"/>
        <end position="128"/>
    </location>
</feature>
<feature type="topological domain" description="Cytoplasmic" evidence="1">
    <location>
        <begin position="1"/>
        <end position="2"/>
    </location>
</feature>
<feature type="transmembrane region" description="Helical" evidence="1">
    <location>
        <begin position="3"/>
        <end position="23"/>
    </location>
</feature>
<feature type="topological domain" description="Periplasmic" evidence="1">
    <location>
        <begin position="24"/>
        <end position="35"/>
    </location>
</feature>
<feature type="transmembrane region" description="Helical" evidence="1">
    <location>
        <begin position="36"/>
        <end position="56"/>
    </location>
</feature>
<feature type="topological domain" description="Cytoplasmic" evidence="1">
    <location>
        <begin position="57"/>
        <end position="76"/>
    </location>
</feature>
<feature type="transmembrane region" description="Helical" evidence="1">
    <location>
        <begin position="77"/>
        <end position="97"/>
    </location>
</feature>
<feature type="topological domain" description="Periplasmic" evidence="1">
    <location>
        <begin position="98"/>
        <end position="100"/>
    </location>
</feature>
<feature type="transmembrane region" description="Helical" evidence="1">
    <location>
        <begin position="101"/>
        <end position="121"/>
    </location>
</feature>
<feature type="topological domain" description="Cytoplasmic" evidence="1">
    <location>
        <begin position="122"/>
        <end position="128"/>
    </location>
</feature>
<keyword id="KW-0997">Cell inner membrane</keyword>
<keyword id="KW-1003">Cell membrane</keyword>
<keyword id="KW-0441">Lipid A biosynthesis</keyword>
<keyword id="KW-0444">Lipid biosynthesis</keyword>
<keyword id="KW-0443">Lipid metabolism</keyword>
<keyword id="KW-0448">Lipopolysaccharide biosynthesis</keyword>
<keyword id="KW-0472">Membrane</keyword>
<keyword id="KW-0812">Transmembrane</keyword>
<keyword id="KW-1133">Transmembrane helix</keyword>
<keyword id="KW-0813">Transport</keyword>
<protein>
    <recommendedName>
        <fullName evidence="1">Probable 4-amino-4-deoxy-L-arabinose-phosphoundecaprenol flippase subunit ArnF</fullName>
        <shortName evidence="1">L-Ara4N-phosphoundecaprenol flippase subunit ArnF</shortName>
    </recommendedName>
    <alternativeName>
        <fullName evidence="1">Undecaprenyl phosphate-aminoarabinose flippase subunit ArnF</fullName>
    </alternativeName>
</protein>
<evidence type="ECO:0000255" key="1">
    <source>
        <dbReference type="HAMAP-Rule" id="MF_00538"/>
    </source>
</evidence>